<sequence length="457" mass="53332">MANDITAHWKDLLRKRLASLKPDGRTEEEKKAEESELFSKYYTEWKGGEKGEDDSFKHIPRFYYRLPAEDEVLMQKLREESRAVFLQRKSRELLDNEELQNLWFLLDKHQVPPTTGDEAMISYESFLKVGEKAGTKCKLFFTARVYAKLLHNDPYGRISIMQFFNYVMRKVWLHQTRIGLSLYDVAGQGYLRESDLENYILELIPTLPQLDGLEKSFYSFYVCTAVRKFFFFLDPLHTGKIKIQDILACSFLDDLLELRDEELSKESQESNWFSAPSALRVYGQYLNLDKDHNGMLSKEELSRYGTGTLTSVFLDRVYQACLTYDGEMDYKTYLDFVLALENRKEPAALQYIFKLLDMENKGYLNVFALNYFFRAIQEQMKIHGQEPVSFQDVKDEIFDMVKPKDPYKITLQDLVNSGQGDTVSSILIDLNGFWTYENREVLVANDTDSNAADLDDT</sequence>
<name>P2R3C_DANRE</name>
<protein>
    <recommendedName>
        <fullName>Serine/threonine-protein phosphatase 2A regulatory subunit B'' subunit gamma</fullName>
    </recommendedName>
</protein>
<proteinExistence type="evidence at transcript level"/>
<keyword id="KW-0106">Calcium</keyword>
<keyword id="KW-0963">Cytoplasm</keyword>
<keyword id="KW-0479">Metal-binding</keyword>
<keyword id="KW-0539">Nucleus</keyword>
<keyword id="KW-1185">Reference proteome</keyword>
<keyword id="KW-0677">Repeat</keyword>
<gene>
    <name type="primary">ppp2r3c</name>
    <name type="ORF">zgc:55473</name>
</gene>
<accession>Q803V3</accession>
<comment type="function">
    <text evidence="1">Possible role in the regulation of cell death.</text>
</comment>
<comment type="subcellular location">
    <subcellularLocation>
        <location evidence="1">Nucleus</location>
    </subcellularLocation>
    <subcellularLocation>
        <location evidence="1">Cytoplasm</location>
    </subcellularLocation>
</comment>
<evidence type="ECO:0000250" key="1">
    <source>
        <dbReference type="UniProtKB" id="Q9JK24"/>
    </source>
</evidence>
<evidence type="ECO:0000255" key="2">
    <source>
        <dbReference type="PROSITE-ProRule" id="PRU10142"/>
    </source>
</evidence>
<dbReference type="EMBL" id="BC044178">
    <property type="protein sequence ID" value="AAH44178.1"/>
    <property type="molecule type" value="mRNA"/>
</dbReference>
<dbReference type="RefSeq" id="NP_956425.1">
    <property type="nucleotide sequence ID" value="NM_200131.1"/>
</dbReference>
<dbReference type="SMR" id="Q803V3"/>
<dbReference type="FunCoup" id="Q803V3">
    <property type="interactions" value="1693"/>
</dbReference>
<dbReference type="STRING" id="7955.ENSDARP00000064553"/>
<dbReference type="PaxDb" id="7955-ENSDARP00000064553"/>
<dbReference type="GeneID" id="393100"/>
<dbReference type="KEGG" id="dre:393100"/>
<dbReference type="AGR" id="ZFIN:ZDB-GENE-040426-715"/>
<dbReference type="CTD" id="55012"/>
<dbReference type="ZFIN" id="ZDB-GENE-040426-715">
    <property type="gene designation" value="ppp2r3c"/>
</dbReference>
<dbReference type="eggNOG" id="KOG2562">
    <property type="taxonomic scope" value="Eukaryota"/>
</dbReference>
<dbReference type="InParanoid" id="Q803V3"/>
<dbReference type="OrthoDB" id="10265007at2759"/>
<dbReference type="PhylomeDB" id="Q803V3"/>
<dbReference type="PRO" id="PR:Q803V3"/>
<dbReference type="Proteomes" id="UP000000437">
    <property type="component" value="Chromosome 17"/>
</dbReference>
<dbReference type="GO" id="GO:0005813">
    <property type="term" value="C:centrosome"/>
    <property type="evidence" value="ECO:0000318"/>
    <property type="project" value="GO_Central"/>
</dbReference>
<dbReference type="GO" id="GO:0005737">
    <property type="term" value="C:cytoplasm"/>
    <property type="evidence" value="ECO:0007669"/>
    <property type="project" value="UniProtKB-SubCell"/>
</dbReference>
<dbReference type="GO" id="GO:0005634">
    <property type="term" value="C:nucleus"/>
    <property type="evidence" value="ECO:0007669"/>
    <property type="project" value="UniProtKB-SubCell"/>
</dbReference>
<dbReference type="GO" id="GO:0046872">
    <property type="term" value="F:metal ion binding"/>
    <property type="evidence" value="ECO:0007669"/>
    <property type="project" value="UniProtKB-KW"/>
</dbReference>
<dbReference type="GO" id="GO:0001782">
    <property type="term" value="P:B cell homeostasis"/>
    <property type="evidence" value="ECO:0000318"/>
    <property type="project" value="GO_Central"/>
</dbReference>
<dbReference type="GO" id="GO:0030865">
    <property type="term" value="P:cortical cytoskeleton organization"/>
    <property type="evidence" value="ECO:0000318"/>
    <property type="project" value="GO_Central"/>
</dbReference>
<dbReference type="GO" id="GO:0000226">
    <property type="term" value="P:microtubule cytoskeleton organization"/>
    <property type="evidence" value="ECO:0000318"/>
    <property type="project" value="GO_Central"/>
</dbReference>
<dbReference type="GO" id="GO:0045579">
    <property type="term" value="P:positive regulation of B cell differentiation"/>
    <property type="evidence" value="ECO:0000318"/>
    <property type="project" value="GO_Central"/>
</dbReference>
<dbReference type="GO" id="GO:0035303">
    <property type="term" value="P:regulation of dephosphorylation"/>
    <property type="evidence" value="ECO:0007669"/>
    <property type="project" value="InterPro"/>
</dbReference>
<dbReference type="GO" id="GO:0043029">
    <property type="term" value="P:T cell homeostasis"/>
    <property type="evidence" value="ECO:0000318"/>
    <property type="project" value="GO_Central"/>
</dbReference>
<dbReference type="CDD" id="cd21505">
    <property type="entry name" value="PPP2R3C"/>
    <property type="match status" value="1"/>
</dbReference>
<dbReference type="FunFam" id="1.10.238.10:FF:000091">
    <property type="entry name" value="Serine/threonine-protein phosphatase 2A regulatory subunit B'' subunit gamma"/>
    <property type="match status" value="1"/>
</dbReference>
<dbReference type="FunFam" id="1.10.238.220:FF:000002">
    <property type="entry name" value="Serine/threonine-protein phosphatase 2A regulatory subunit B'' subunit gamma"/>
    <property type="match status" value="1"/>
</dbReference>
<dbReference type="Gene3D" id="1.10.238.220">
    <property type="match status" value="1"/>
</dbReference>
<dbReference type="Gene3D" id="1.10.238.10">
    <property type="entry name" value="EF-hand"/>
    <property type="match status" value="1"/>
</dbReference>
<dbReference type="InterPro" id="IPR011992">
    <property type="entry name" value="EF-hand-dom_pair"/>
</dbReference>
<dbReference type="InterPro" id="IPR041534">
    <property type="entry name" value="EF-hand_13"/>
</dbReference>
<dbReference type="InterPro" id="IPR018247">
    <property type="entry name" value="EF_Hand_1_Ca_BS"/>
</dbReference>
<dbReference type="InterPro" id="IPR039865">
    <property type="entry name" value="PPP2R3C"/>
</dbReference>
<dbReference type="PANTHER" id="PTHR12085">
    <property type="entry name" value="SERINE/THREONINE-PROTEIN PHOSPHATASE 2A REGULATORY SUBUNIT B'' SUBUNIT GAMMA"/>
    <property type="match status" value="1"/>
</dbReference>
<dbReference type="PANTHER" id="PTHR12085:SF3">
    <property type="entry name" value="SERINE_THREONINE-PROTEIN PHOSPHATASE 2A REGULATORY SUBUNIT B'' SUBUNIT GAMMA"/>
    <property type="match status" value="1"/>
</dbReference>
<dbReference type="Pfam" id="PF17958">
    <property type="entry name" value="EF-hand_13"/>
    <property type="match status" value="1"/>
</dbReference>
<dbReference type="SUPFAM" id="SSF47473">
    <property type="entry name" value="EF-hand"/>
    <property type="match status" value="2"/>
</dbReference>
<dbReference type="PROSITE" id="PS00018">
    <property type="entry name" value="EF_HAND_1"/>
    <property type="match status" value="1"/>
</dbReference>
<organism>
    <name type="scientific">Danio rerio</name>
    <name type="common">Zebrafish</name>
    <name type="synonym">Brachydanio rerio</name>
    <dbReference type="NCBI Taxonomy" id="7955"/>
    <lineage>
        <taxon>Eukaryota</taxon>
        <taxon>Metazoa</taxon>
        <taxon>Chordata</taxon>
        <taxon>Craniata</taxon>
        <taxon>Vertebrata</taxon>
        <taxon>Euteleostomi</taxon>
        <taxon>Actinopterygii</taxon>
        <taxon>Neopterygii</taxon>
        <taxon>Teleostei</taxon>
        <taxon>Ostariophysi</taxon>
        <taxon>Cypriniformes</taxon>
        <taxon>Danionidae</taxon>
        <taxon>Danioninae</taxon>
        <taxon>Danio</taxon>
    </lineage>
</organism>
<reference key="1">
    <citation type="submission" date="2003-01" db="EMBL/GenBank/DDBJ databases">
        <authorList>
            <consortium name="NIH - Zebrafish Gene Collection (ZGC) project"/>
        </authorList>
    </citation>
    <scope>NUCLEOTIDE SEQUENCE [LARGE SCALE MRNA]</scope>
    <source>
        <strain>AB</strain>
    </source>
</reference>
<feature type="chain" id="PRO_0000277836" description="Serine/threonine-protein phosphatase 2A regulatory subunit B'' subunit gamma">
    <location>
        <begin position="1"/>
        <end position="457"/>
    </location>
</feature>
<feature type="domain" description="EF-hand 1">
    <location>
        <begin position="276"/>
        <end position="311"/>
    </location>
</feature>
<feature type="domain" description="EF-hand 2">
    <location>
        <begin position="344"/>
        <end position="379"/>
    </location>
</feature>
<feature type="binding site" evidence="2">
    <location>
        <position position="289"/>
    </location>
    <ligand>
        <name>Ca(2+)</name>
        <dbReference type="ChEBI" id="CHEBI:29108"/>
    </ligand>
</feature>
<feature type="binding site" evidence="2">
    <location>
        <position position="291"/>
    </location>
    <ligand>
        <name>Ca(2+)</name>
        <dbReference type="ChEBI" id="CHEBI:29108"/>
    </ligand>
</feature>
<feature type="binding site" evidence="2">
    <location>
        <position position="293"/>
    </location>
    <ligand>
        <name>Ca(2+)</name>
        <dbReference type="ChEBI" id="CHEBI:29108"/>
    </ligand>
</feature>
<feature type="binding site" evidence="2">
    <location>
        <position position="295"/>
    </location>
    <ligand>
        <name>Ca(2+)</name>
        <dbReference type="ChEBI" id="CHEBI:29108"/>
    </ligand>
</feature>
<feature type="binding site" evidence="2">
    <location>
        <position position="300"/>
    </location>
    <ligand>
        <name>Ca(2+)</name>
        <dbReference type="ChEBI" id="CHEBI:29108"/>
    </ligand>
</feature>